<accession>B8CRG2</accession>
<evidence type="ECO:0000255" key="1">
    <source>
        <dbReference type="HAMAP-Rule" id="MF_00575"/>
    </source>
</evidence>
<protein>
    <recommendedName>
        <fullName evidence="1">UDP-2,3-diacylglucosamine hydrolase</fullName>
        <ecNumber evidence="1">3.6.1.54</ecNumber>
    </recommendedName>
    <alternativeName>
        <fullName evidence="1">UDP-2,3-diacylglucosamine diphosphatase</fullName>
    </alternativeName>
</protein>
<organism>
    <name type="scientific">Shewanella piezotolerans (strain WP3 / JCM 13877)</name>
    <dbReference type="NCBI Taxonomy" id="225849"/>
    <lineage>
        <taxon>Bacteria</taxon>
        <taxon>Pseudomonadati</taxon>
        <taxon>Pseudomonadota</taxon>
        <taxon>Gammaproteobacteria</taxon>
        <taxon>Alteromonadales</taxon>
        <taxon>Shewanellaceae</taxon>
        <taxon>Shewanella</taxon>
    </lineage>
</organism>
<proteinExistence type="inferred from homology"/>
<name>LPXH_SHEPW</name>
<reference key="1">
    <citation type="journal article" date="2008" name="PLoS ONE">
        <title>Environmental adaptation: genomic analysis of the piezotolerant and psychrotolerant deep-sea iron reducing bacterium Shewanella piezotolerans WP3.</title>
        <authorList>
            <person name="Wang F."/>
            <person name="Wang J."/>
            <person name="Jian H."/>
            <person name="Zhang B."/>
            <person name="Li S."/>
            <person name="Wang F."/>
            <person name="Zeng X."/>
            <person name="Gao L."/>
            <person name="Bartlett D.H."/>
            <person name="Yu J."/>
            <person name="Hu S."/>
            <person name="Xiao X."/>
        </authorList>
    </citation>
    <scope>NUCLEOTIDE SEQUENCE [LARGE SCALE GENOMIC DNA]</scope>
    <source>
        <strain>WP3 / JCM 13877</strain>
    </source>
</reference>
<sequence>MRTLFVGDLHLSADRPDITQAFLTFLETQLTDTSALYILGDLFEVWVGDDIAEPFANQLADAIKLASKKLPIYFIHGNRDFLIGERFAQRSGMTLLPEVYKLDLYGTTTVLLHGDSLCTLDKPYQRFRKFRNLSWAKWIYNHLPKSKRLNIAAKLRSKSQSSNQHKSYSIMDVEPSAVLELLDNTNAQQMIHGHTHRPAIHQLSNGKRRIVVGDWYEQGSMLCISQDNVELIELPFGK</sequence>
<keyword id="KW-0997">Cell inner membrane</keyword>
<keyword id="KW-1003">Cell membrane</keyword>
<keyword id="KW-0378">Hydrolase</keyword>
<keyword id="KW-0441">Lipid A biosynthesis</keyword>
<keyword id="KW-0444">Lipid biosynthesis</keyword>
<keyword id="KW-0443">Lipid metabolism</keyword>
<keyword id="KW-0464">Manganese</keyword>
<keyword id="KW-0472">Membrane</keyword>
<keyword id="KW-0479">Metal-binding</keyword>
<comment type="function">
    <text evidence="1">Hydrolyzes the pyrophosphate bond of UDP-2,3-diacylglucosamine to yield 2,3-diacylglucosamine 1-phosphate (lipid X) and UMP by catalyzing the attack of water at the alpha-P atom. Involved in the biosynthesis of lipid A, a phosphorylated glycolipid that anchors the lipopolysaccharide to the outer membrane of the cell.</text>
</comment>
<comment type="catalytic activity">
    <reaction evidence="1">
        <text>UDP-2-N,3-O-bis[(3R)-3-hydroxytetradecanoyl]-alpha-D-glucosamine + H2O = 2-N,3-O-bis[(3R)-3-hydroxytetradecanoyl]-alpha-D-glucosaminyl 1-phosphate + UMP + 2 H(+)</text>
        <dbReference type="Rhea" id="RHEA:25213"/>
        <dbReference type="ChEBI" id="CHEBI:15377"/>
        <dbReference type="ChEBI" id="CHEBI:15378"/>
        <dbReference type="ChEBI" id="CHEBI:57865"/>
        <dbReference type="ChEBI" id="CHEBI:57957"/>
        <dbReference type="ChEBI" id="CHEBI:78847"/>
        <dbReference type="EC" id="3.6.1.54"/>
    </reaction>
</comment>
<comment type="cofactor">
    <cofactor evidence="1">
        <name>Mn(2+)</name>
        <dbReference type="ChEBI" id="CHEBI:29035"/>
    </cofactor>
    <text evidence="1">Binds 2 Mn(2+) ions per subunit in a binuclear metal center.</text>
</comment>
<comment type="pathway">
    <text evidence="1">Glycolipid biosynthesis; lipid IV(A) biosynthesis; lipid IV(A) from (3R)-3-hydroxytetradecanoyl-[acyl-carrier-protein] and UDP-N-acetyl-alpha-D-glucosamine: step 4/6.</text>
</comment>
<comment type="subcellular location">
    <subcellularLocation>
        <location evidence="1">Cell inner membrane</location>
        <topology evidence="1">Peripheral membrane protein</topology>
        <orientation evidence="1">Cytoplasmic side</orientation>
    </subcellularLocation>
</comment>
<comment type="similarity">
    <text evidence="1">Belongs to the LpxH family.</text>
</comment>
<feature type="chain" id="PRO_1000129538" description="UDP-2,3-diacylglucosamine hydrolase">
    <location>
        <begin position="1"/>
        <end position="238"/>
    </location>
</feature>
<feature type="binding site" evidence="1">
    <location>
        <position position="8"/>
    </location>
    <ligand>
        <name>Mn(2+)</name>
        <dbReference type="ChEBI" id="CHEBI:29035"/>
        <label>1</label>
    </ligand>
</feature>
<feature type="binding site" evidence="1">
    <location>
        <position position="10"/>
    </location>
    <ligand>
        <name>Mn(2+)</name>
        <dbReference type="ChEBI" id="CHEBI:29035"/>
        <label>1</label>
    </ligand>
</feature>
<feature type="binding site" evidence="1">
    <location>
        <position position="41"/>
    </location>
    <ligand>
        <name>Mn(2+)</name>
        <dbReference type="ChEBI" id="CHEBI:29035"/>
        <label>1</label>
    </ligand>
</feature>
<feature type="binding site" evidence="1">
    <location>
        <position position="41"/>
    </location>
    <ligand>
        <name>Mn(2+)</name>
        <dbReference type="ChEBI" id="CHEBI:29035"/>
        <label>2</label>
    </ligand>
</feature>
<feature type="binding site" evidence="1">
    <location>
        <begin position="78"/>
        <end position="79"/>
    </location>
    <ligand>
        <name>substrate</name>
    </ligand>
</feature>
<feature type="binding site" evidence="1">
    <location>
        <position position="78"/>
    </location>
    <ligand>
        <name>Mn(2+)</name>
        <dbReference type="ChEBI" id="CHEBI:29035"/>
        <label>2</label>
    </ligand>
</feature>
<feature type="binding site" evidence="1">
    <location>
        <position position="113"/>
    </location>
    <ligand>
        <name>Mn(2+)</name>
        <dbReference type="ChEBI" id="CHEBI:29035"/>
        <label>2</label>
    </ligand>
</feature>
<feature type="binding site" evidence="1">
    <location>
        <position position="121"/>
    </location>
    <ligand>
        <name>substrate</name>
    </ligand>
</feature>
<feature type="binding site" evidence="1">
    <location>
        <position position="159"/>
    </location>
    <ligand>
        <name>substrate</name>
    </ligand>
</feature>
<feature type="binding site" evidence="1">
    <location>
        <position position="163"/>
    </location>
    <ligand>
        <name>substrate</name>
    </ligand>
</feature>
<feature type="binding site" evidence="1">
    <location>
        <position position="166"/>
    </location>
    <ligand>
        <name>substrate</name>
    </ligand>
</feature>
<feature type="binding site" evidence="1">
    <location>
        <position position="194"/>
    </location>
    <ligand>
        <name>Mn(2+)</name>
        <dbReference type="ChEBI" id="CHEBI:29035"/>
        <label>2</label>
    </ligand>
</feature>
<feature type="binding site" evidence="1">
    <location>
        <position position="194"/>
    </location>
    <ligand>
        <name>substrate</name>
    </ligand>
</feature>
<feature type="binding site" evidence="1">
    <location>
        <position position="196"/>
    </location>
    <ligand>
        <name>Mn(2+)</name>
        <dbReference type="ChEBI" id="CHEBI:29035"/>
        <label>1</label>
    </ligand>
</feature>
<gene>
    <name evidence="1" type="primary">lpxH</name>
    <name type="ordered locus">swp_3266</name>
</gene>
<dbReference type="EC" id="3.6.1.54" evidence="1"/>
<dbReference type="EMBL" id="CP000472">
    <property type="protein sequence ID" value="ACJ29970.1"/>
    <property type="molecule type" value="Genomic_DNA"/>
</dbReference>
<dbReference type="RefSeq" id="WP_020913320.1">
    <property type="nucleotide sequence ID" value="NC_011566.1"/>
</dbReference>
<dbReference type="SMR" id="B8CRG2"/>
<dbReference type="STRING" id="225849.swp_3266"/>
<dbReference type="KEGG" id="swp:swp_3266"/>
<dbReference type="eggNOG" id="COG2908">
    <property type="taxonomic scope" value="Bacteria"/>
</dbReference>
<dbReference type="HOGENOM" id="CLU_074586_0_0_6"/>
<dbReference type="OrthoDB" id="9783283at2"/>
<dbReference type="UniPathway" id="UPA00359">
    <property type="reaction ID" value="UER00480"/>
</dbReference>
<dbReference type="Proteomes" id="UP000000753">
    <property type="component" value="Chromosome"/>
</dbReference>
<dbReference type="GO" id="GO:0005737">
    <property type="term" value="C:cytoplasm"/>
    <property type="evidence" value="ECO:0007669"/>
    <property type="project" value="InterPro"/>
</dbReference>
<dbReference type="GO" id="GO:0019897">
    <property type="term" value="C:extrinsic component of plasma membrane"/>
    <property type="evidence" value="ECO:0007669"/>
    <property type="project" value="UniProtKB-UniRule"/>
</dbReference>
<dbReference type="GO" id="GO:0030145">
    <property type="term" value="F:manganese ion binding"/>
    <property type="evidence" value="ECO:0007669"/>
    <property type="project" value="UniProtKB-UniRule"/>
</dbReference>
<dbReference type="GO" id="GO:0008758">
    <property type="term" value="F:UDP-2,3-diacylglucosamine hydrolase activity"/>
    <property type="evidence" value="ECO:0007669"/>
    <property type="project" value="UniProtKB-UniRule"/>
</dbReference>
<dbReference type="GO" id="GO:0009245">
    <property type="term" value="P:lipid A biosynthetic process"/>
    <property type="evidence" value="ECO:0007669"/>
    <property type="project" value="UniProtKB-UniRule"/>
</dbReference>
<dbReference type="CDD" id="cd07398">
    <property type="entry name" value="MPP_YbbF-LpxH"/>
    <property type="match status" value="1"/>
</dbReference>
<dbReference type="Gene3D" id="3.60.21.10">
    <property type="match status" value="1"/>
</dbReference>
<dbReference type="HAMAP" id="MF_00575">
    <property type="entry name" value="LpxH"/>
    <property type="match status" value="1"/>
</dbReference>
<dbReference type="InterPro" id="IPR004843">
    <property type="entry name" value="Calcineurin-like_PHP_ApaH"/>
</dbReference>
<dbReference type="InterPro" id="IPR043461">
    <property type="entry name" value="LpxH-like"/>
</dbReference>
<dbReference type="InterPro" id="IPR029052">
    <property type="entry name" value="Metallo-depent_PP-like"/>
</dbReference>
<dbReference type="InterPro" id="IPR010138">
    <property type="entry name" value="UDP-diacylglucosamine_Hdrlase"/>
</dbReference>
<dbReference type="NCBIfam" id="TIGR01854">
    <property type="entry name" value="lipid_A_lpxH"/>
    <property type="match status" value="1"/>
</dbReference>
<dbReference type="NCBIfam" id="NF003743">
    <property type="entry name" value="PRK05340.1"/>
    <property type="match status" value="1"/>
</dbReference>
<dbReference type="PANTHER" id="PTHR34990:SF1">
    <property type="entry name" value="UDP-2,3-DIACYLGLUCOSAMINE HYDROLASE"/>
    <property type="match status" value="1"/>
</dbReference>
<dbReference type="PANTHER" id="PTHR34990">
    <property type="entry name" value="UDP-2,3-DIACYLGLUCOSAMINE HYDROLASE-RELATED"/>
    <property type="match status" value="1"/>
</dbReference>
<dbReference type="Pfam" id="PF00149">
    <property type="entry name" value="Metallophos"/>
    <property type="match status" value="1"/>
</dbReference>
<dbReference type="SUPFAM" id="SSF56300">
    <property type="entry name" value="Metallo-dependent phosphatases"/>
    <property type="match status" value="1"/>
</dbReference>